<dbReference type="EMBL" id="CP000422">
    <property type="protein sequence ID" value="ABJ68522.1"/>
    <property type="molecule type" value="Genomic_DNA"/>
</dbReference>
<dbReference type="RefSeq" id="WP_002833259.1">
    <property type="nucleotide sequence ID" value="NC_008525.1"/>
</dbReference>
<dbReference type="SMR" id="Q03E50"/>
<dbReference type="STRING" id="278197.PEPE_1491"/>
<dbReference type="GeneID" id="33062016"/>
<dbReference type="KEGG" id="ppe:PEPE_1491"/>
<dbReference type="eggNOG" id="COG0244">
    <property type="taxonomic scope" value="Bacteria"/>
</dbReference>
<dbReference type="HOGENOM" id="CLU_092227_2_0_9"/>
<dbReference type="OrthoDB" id="9808307at2"/>
<dbReference type="Proteomes" id="UP000000773">
    <property type="component" value="Chromosome"/>
</dbReference>
<dbReference type="GO" id="GO:0015934">
    <property type="term" value="C:large ribosomal subunit"/>
    <property type="evidence" value="ECO:0007669"/>
    <property type="project" value="InterPro"/>
</dbReference>
<dbReference type="GO" id="GO:0070180">
    <property type="term" value="F:large ribosomal subunit rRNA binding"/>
    <property type="evidence" value="ECO:0007669"/>
    <property type="project" value="UniProtKB-UniRule"/>
</dbReference>
<dbReference type="GO" id="GO:0003735">
    <property type="term" value="F:structural constituent of ribosome"/>
    <property type="evidence" value="ECO:0007669"/>
    <property type="project" value="InterPro"/>
</dbReference>
<dbReference type="GO" id="GO:0006412">
    <property type="term" value="P:translation"/>
    <property type="evidence" value="ECO:0007669"/>
    <property type="project" value="UniProtKB-UniRule"/>
</dbReference>
<dbReference type="CDD" id="cd05797">
    <property type="entry name" value="Ribosomal_L10"/>
    <property type="match status" value="1"/>
</dbReference>
<dbReference type="FunFam" id="3.30.70.1730:FF:000001">
    <property type="entry name" value="50S ribosomal protein L10"/>
    <property type="match status" value="1"/>
</dbReference>
<dbReference type="Gene3D" id="3.30.70.1730">
    <property type="match status" value="1"/>
</dbReference>
<dbReference type="HAMAP" id="MF_00362">
    <property type="entry name" value="Ribosomal_uL10"/>
    <property type="match status" value="1"/>
</dbReference>
<dbReference type="InterPro" id="IPR001790">
    <property type="entry name" value="Ribosomal_uL10"/>
</dbReference>
<dbReference type="InterPro" id="IPR043141">
    <property type="entry name" value="Ribosomal_uL10-like_sf"/>
</dbReference>
<dbReference type="InterPro" id="IPR022973">
    <property type="entry name" value="Ribosomal_uL10_bac"/>
</dbReference>
<dbReference type="InterPro" id="IPR047865">
    <property type="entry name" value="Ribosomal_uL10_bac_type"/>
</dbReference>
<dbReference type="InterPro" id="IPR002363">
    <property type="entry name" value="Ribosomal_uL10_CS_bac"/>
</dbReference>
<dbReference type="NCBIfam" id="NF000955">
    <property type="entry name" value="PRK00099.1-1"/>
    <property type="match status" value="1"/>
</dbReference>
<dbReference type="PANTHER" id="PTHR11560">
    <property type="entry name" value="39S RIBOSOMAL PROTEIN L10, MITOCHONDRIAL"/>
    <property type="match status" value="1"/>
</dbReference>
<dbReference type="Pfam" id="PF00466">
    <property type="entry name" value="Ribosomal_L10"/>
    <property type="match status" value="1"/>
</dbReference>
<dbReference type="SUPFAM" id="SSF160369">
    <property type="entry name" value="Ribosomal protein L10-like"/>
    <property type="match status" value="1"/>
</dbReference>
<dbReference type="PROSITE" id="PS01109">
    <property type="entry name" value="RIBOSOMAL_L10"/>
    <property type="match status" value="1"/>
</dbReference>
<proteinExistence type="inferred from homology"/>
<protein>
    <recommendedName>
        <fullName evidence="1">Large ribosomal subunit protein uL10</fullName>
    </recommendedName>
    <alternativeName>
        <fullName evidence="2">50S ribosomal protein L10</fullName>
    </alternativeName>
</protein>
<sequence>MSKEAIAQKAAIVDEVAEQLKESVSAIVVDSRGLTVAEVTDLRKQLRDAGIKLRVIKNKVLTRAAEKAGFEGMDDVFVGPSAVAFSEEDAVAPAKILKTFADSNDNLSIKGGIIEGEVADIDTINTFATLPSREDLLAMLANEFMSPVRDVAYALKAVADKKSEEDAA</sequence>
<name>RL10_PEDPA</name>
<accession>Q03E50</accession>
<feature type="chain" id="PRO_1000005551" description="Large ribosomal subunit protein uL10">
    <location>
        <begin position="1"/>
        <end position="168"/>
    </location>
</feature>
<organism>
    <name type="scientific">Pediococcus pentosaceus (strain ATCC 25745 / CCUG 21536 / LMG 10740 / 183-1w)</name>
    <dbReference type="NCBI Taxonomy" id="278197"/>
    <lineage>
        <taxon>Bacteria</taxon>
        <taxon>Bacillati</taxon>
        <taxon>Bacillota</taxon>
        <taxon>Bacilli</taxon>
        <taxon>Lactobacillales</taxon>
        <taxon>Lactobacillaceae</taxon>
        <taxon>Pediococcus</taxon>
    </lineage>
</organism>
<evidence type="ECO:0000255" key="1">
    <source>
        <dbReference type="HAMAP-Rule" id="MF_00362"/>
    </source>
</evidence>
<evidence type="ECO:0000305" key="2"/>
<keyword id="KW-0687">Ribonucleoprotein</keyword>
<keyword id="KW-0689">Ribosomal protein</keyword>
<keyword id="KW-0694">RNA-binding</keyword>
<keyword id="KW-0699">rRNA-binding</keyword>
<comment type="function">
    <text evidence="1">Forms part of the ribosomal stalk, playing a central role in the interaction of the ribosome with GTP-bound translation factors.</text>
</comment>
<comment type="subunit">
    <text evidence="1">Part of the ribosomal stalk of the 50S ribosomal subunit. The N-terminus interacts with L11 and the large rRNA to form the base of the stalk. The C-terminus forms an elongated spine to which L12 dimers bind in a sequential fashion forming a multimeric L10(L12)X complex.</text>
</comment>
<comment type="similarity">
    <text evidence="1">Belongs to the universal ribosomal protein uL10 family.</text>
</comment>
<reference key="1">
    <citation type="journal article" date="2006" name="Proc. Natl. Acad. Sci. U.S.A.">
        <title>Comparative genomics of the lactic acid bacteria.</title>
        <authorList>
            <person name="Makarova K.S."/>
            <person name="Slesarev A."/>
            <person name="Wolf Y.I."/>
            <person name="Sorokin A."/>
            <person name="Mirkin B."/>
            <person name="Koonin E.V."/>
            <person name="Pavlov A."/>
            <person name="Pavlova N."/>
            <person name="Karamychev V."/>
            <person name="Polouchine N."/>
            <person name="Shakhova V."/>
            <person name="Grigoriev I."/>
            <person name="Lou Y."/>
            <person name="Rohksar D."/>
            <person name="Lucas S."/>
            <person name="Huang K."/>
            <person name="Goodstein D.M."/>
            <person name="Hawkins T."/>
            <person name="Plengvidhya V."/>
            <person name="Welker D."/>
            <person name="Hughes J."/>
            <person name="Goh Y."/>
            <person name="Benson A."/>
            <person name="Baldwin K."/>
            <person name="Lee J.-H."/>
            <person name="Diaz-Muniz I."/>
            <person name="Dosti B."/>
            <person name="Smeianov V."/>
            <person name="Wechter W."/>
            <person name="Barabote R."/>
            <person name="Lorca G."/>
            <person name="Altermann E."/>
            <person name="Barrangou R."/>
            <person name="Ganesan B."/>
            <person name="Xie Y."/>
            <person name="Rawsthorne H."/>
            <person name="Tamir D."/>
            <person name="Parker C."/>
            <person name="Breidt F."/>
            <person name="Broadbent J.R."/>
            <person name="Hutkins R."/>
            <person name="O'Sullivan D."/>
            <person name="Steele J."/>
            <person name="Unlu G."/>
            <person name="Saier M.H. Jr."/>
            <person name="Klaenhammer T."/>
            <person name="Richardson P."/>
            <person name="Kozyavkin S."/>
            <person name="Weimer B.C."/>
            <person name="Mills D.A."/>
        </authorList>
    </citation>
    <scope>NUCLEOTIDE SEQUENCE [LARGE SCALE GENOMIC DNA]</scope>
    <source>
        <strain>ATCC 25745 / CCUG 21536 / LMG 10740 / 183-1w</strain>
    </source>
</reference>
<gene>
    <name evidence="1" type="primary">rplJ</name>
    <name type="ordered locus">PEPE_1491</name>
</gene>